<sequence>MTIETFSWGIKVSSQPTEGSKDTVRKIQFGDGYAQVSGSGLNDEIRTYEFSFSGDPITANEIHAFLRRHKVKSFIFTPPFGDTALWRVEADTLKKVVKNVKVITVTATFEQAFAP</sequence>
<comment type="function">
    <text evidence="1">Part of the distal tail tip which plays a role in DNA ejection during entry, and in tail assembly initiation during exit. May bind tail tip complex associated with tape measure protein and allow tail tube protein polymerization on top of tail tip.</text>
</comment>
<comment type="subcellular location">
    <subcellularLocation>
        <location evidence="1">Virion</location>
    </subcellularLocation>
    <subcellularLocation>
        <location evidence="1">Host cytoplasm</location>
    </subcellularLocation>
</comment>
<comment type="similarity">
    <text evidence="3">Belongs to the lambda-like tail tip protein M family.</text>
</comment>
<name>TIPM_BPN15</name>
<protein>
    <recommendedName>
        <fullName evidence="2">Tail tip protein M</fullName>
    </recommendedName>
    <alternativeName>
        <fullName evidence="3">Gene product 17</fullName>
        <shortName evidence="3">gp17</shortName>
    </alternativeName>
</protein>
<gene>
    <name evidence="4" type="primary">gene 17</name>
</gene>
<evidence type="ECO:0000250" key="1">
    <source>
        <dbReference type="UniProtKB" id="P03737"/>
    </source>
</evidence>
<evidence type="ECO:0000303" key="2">
    <source>
    </source>
</evidence>
<evidence type="ECO:0000305" key="3"/>
<evidence type="ECO:0000312" key="4">
    <source>
        <dbReference type="EMBL" id="AAC19053.1"/>
    </source>
</evidence>
<evidence type="ECO:0000312" key="5">
    <source>
        <dbReference type="Proteomes" id="UP000002132"/>
    </source>
</evidence>
<accession>O64331</accession>
<keyword id="KW-1035">Host cytoplasm</keyword>
<keyword id="KW-0426">Late protein</keyword>
<keyword id="KW-1185">Reference proteome</keyword>
<keyword id="KW-1171">Viral genome ejection through host cell envelope</keyword>
<keyword id="KW-1243">Viral long flexible tail ejection system</keyword>
<keyword id="KW-1162">Viral penetration into host cytoplasm</keyword>
<keyword id="KW-1227">Viral tail protein</keyword>
<keyword id="KW-0946">Virion</keyword>
<keyword id="KW-1160">Virus entry into host cell</keyword>
<proteinExistence type="inferred from homology"/>
<organismHost>
    <name type="scientific">Escherichia coli</name>
    <dbReference type="NCBI Taxonomy" id="562"/>
</organismHost>
<reference key="1">
    <citation type="journal article" date="2000" name="J. Mol. Biol.">
        <title>Genomic sequence and analysis of the atypical temperate bacteriophage N15.</title>
        <authorList>
            <person name="Ravin V."/>
            <person name="Ravin N."/>
            <person name="Casjens S."/>
            <person name="Ford M.E."/>
            <person name="Hatfull G.F."/>
            <person name="Hendrix R.W."/>
        </authorList>
    </citation>
    <scope>NUCLEOTIDE SEQUENCE [LARGE SCALE GENOMIC DNA]</scope>
    <scope>IDENTIFICATION</scope>
</reference>
<feature type="chain" id="PRO_0000432899" description="Tail tip protein M">
    <location>
        <begin position="1"/>
        <end position="115"/>
    </location>
</feature>
<organism evidence="5">
    <name type="scientific">Escherichia phage N15</name>
    <name type="common">Bacteriophage N15</name>
    <dbReference type="NCBI Taxonomy" id="1604876"/>
    <lineage>
        <taxon>Viruses</taxon>
        <taxon>Duplodnaviria</taxon>
        <taxon>Heunggongvirae</taxon>
        <taxon>Uroviricota</taxon>
        <taxon>Caudoviricetes</taxon>
        <taxon>Ravinvirus</taxon>
        <taxon>Ravinvirus N15</taxon>
    </lineage>
</organism>
<dbReference type="EMBL" id="AF064539">
    <property type="protein sequence ID" value="AAC19053.1"/>
    <property type="molecule type" value="Genomic_DNA"/>
</dbReference>
<dbReference type="PIR" id="T13103">
    <property type="entry name" value="T13103"/>
</dbReference>
<dbReference type="RefSeq" id="NP_046912.1">
    <property type="nucleotide sequence ID" value="NC_001901.1"/>
</dbReference>
<dbReference type="SMR" id="O64331"/>
<dbReference type="GeneID" id="1261656"/>
<dbReference type="KEGG" id="vg:1261656"/>
<dbReference type="Proteomes" id="UP000002132">
    <property type="component" value="Genome"/>
</dbReference>
<dbReference type="GO" id="GO:0030430">
    <property type="term" value="C:host cell cytoplasm"/>
    <property type="evidence" value="ECO:0007669"/>
    <property type="project" value="UniProtKB-SubCell"/>
</dbReference>
<dbReference type="GO" id="GO:0098015">
    <property type="term" value="C:virus tail"/>
    <property type="evidence" value="ECO:0007669"/>
    <property type="project" value="UniProtKB-KW"/>
</dbReference>
<dbReference type="GO" id="GO:0099001">
    <property type="term" value="P:symbiont genome ejection through host cell envelope, long flexible tail mechanism"/>
    <property type="evidence" value="ECO:0007669"/>
    <property type="project" value="UniProtKB-KW"/>
</dbReference>
<dbReference type="InterPro" id="IPR010265">
    <property type="entry name" value="Phage_lambda_TipM"/>
</dbReference>
<dbReference type="Pfam" id="PF05939">
    <property type="entry name" value="Phage_min_tail"/>
    <property type="match status" value="1"/>
</dbReference>